<organism>
    <name type="scientific">Shewanella frigidimarina (strain NCIMB 400)</name>
    <dbReference type="NCBI Taxonomy" id="318167"/>
    <lineage>
        <taxon>Bacteria</taxon>
        <taxon>Pseudomonadati</taxon>
        <taxon>Pseudomonadota</taxon>
        <taxon>Gammaproteobacteria</taxon>
        <taxon>Alteromonadales</taxon>
        <taxon>Shewanellaceae</taxon>
        <taxon>Shewanella</taxon>
    </lineage>
</organism>
<feature type="chain" id="PRO_1000058456" description="Glycerol kinase">
    <location>
        <begin position="1"/>
        <end position="498"/>
    </location>
</feature>
<feature type="binding site" evidence="1">
    <location>
        <position position="14"/>
    </location>
    <ligand>
        <name>ADP</name>
        <dbReference type="ChEBI" id="CHEBI:456216"/>
    </ligand>
</feature>
<feature type="binding site" evidence="1">
    <location>
        <position position="14"/>
    </location>
    <ligand>
        <name>ATP</name>
        <dbReference type="ChEBI" id="CHEBI:30616"/>
    </ligand>
</feature>
<feature type="binding site" evidence="1">
    <location>
        <position position="14"/>
    </location>
    <ligand>
        <name>sn-glycerol 3-phosphate</name>
        <dbReference type="ChEBI" id="CHEBI:57597"/>
    </ligand>
</feature>
<feature type="binding site" evidence="1">
    <location>
        <position position="15"/>
    </location>
    <ligand>
        <name>ATP</name>
        <dbReference type="ChEBI" id="CHEBI:30616"/>
    </ligand>
</feature>
<feature type="binding site" evidence="1">
    <location>
        <position position="16"/>
    </location>
    <ligand>
        <name>ATP</name>
        <dbReference type="ChEBI" id="CHEBI:30616"/>
    </ligand>
</feature>
<feature type="binding site" evidence="1">
    <location>
        <position position="18"/>
    </location>
    <ligand>
        <name>ADP</name>
        <dbReference type="ChEBI" id="CHEBI:456216"/>
    </ligand>
</feature>
<feature type="binding site" evidence="1">
    <location>
        <position position="84"/>
    </location>
    <ligand>
        <name>glycerol</name>
        <dbReference type="ChEBI" id="CHEBI:17754"/>
    </ligand>
</feature>
<feature type="binding site" evidence="1">
    <location>
        <position position="84"/>
    </location>
    <ligand>
        <name>sn-glycerol 3-phosphate</name>
        <dbReference type="ChEBI" id="CHEBI:57597"/>
    </ligand>
</feature>
<feature type="binding site" evidence="1">
    <location>
        <position position="85"/>
    </location>
    <ligand>
        <name>glycerol</name>
        <dbReference type="ChEBI" id="CHEBI:17754"/>
    </ligand>
</feature>
<feature type="binding site" evidence="1">
    <location>
        <position position="85"/>
    </location>
    <ligand>
        <name>sn-glycerol 3-phosphate</name>
        <dbReference type="ChEBI" id="CHEBI:57597"/>
    </ligand>
</feature>
<feature type="binding site" evidence="1">
    <location>
        <position position="136"/>
    </location>
    <ligand>
        <name>glycerol</name>
        <dbReference type="ChEBI" id="CHEBI:17754"/>
    </ligand>
</feature>
<feature type="binding site" evidence="1">
    <location>
        <position position="136"/>
    </location>
    <ligand>
        <name>sn-glycerol 3-phosphate</name>
        <dbReference type="ChEBI" id="CHEBI:57597"/>
    </ligand>
</feature>
<feature type="binding site" evidence="1">
    <location>
        <position position="243"/>
    </location>
    <ligand>
        <name>glycerol</name>
        <dbReference type="ChEBI" id="CHEBI:17754"/>
    </ligand>
</feature>
<feature type="binding site" evidence="1">
    <location>
        <position position="243"/>
    </location>
    <ligand>
        <name>sn-glycerol 3-phosphate</name>
        <dbReference type="ChEBI" id="CHEBI:57597"/>
    </ligand>
</feature>
<feature type="binding site" evidence="1">
    <location>
        <position position="244"/>
    </location>
    <ligand>
        <name>glycerol</name>
        <dbReference type="ChEBI" id="CHEBI:17754"/>
    </ligand>
</feature>
<feature type="binding site" evidence="1">
    <location>
        <position position="265"/>
    </location>
    <ligand>
        <name>ADP</name>
        <dbReference type="ChEBI" id="CHEBI:456216"/>
    </ligand>
</feature>
<feature type="binding site" evidence="1">
    <location>
        <position position="265"/>
    </location>
    <ligand>
        <name>ATP</name>
        <dbReference type="ChEBI" id="CHEBI:30616"/>
    </ligand>
</feature>
<feature type="binding site" evidence="1">
    <location>
        <position position="308"/>
    </location>
    <ligand>
        <name>ADP</name>
        <dbReference type="ChEBI" id="CHEBI:456216"/>
    </ligand>
</feature>
<feature type="binding site" evidence="1">
    <location>
        <position position="308"/>
    </location>
    <ligand>
        <name>ATP</name>
        <dbReference type="ChEBI" id="CHEBI:30616"/>
    </ligand>
</feature>
<feature type="binding site" evidence="1">
    <location>
        <position position="312"/>
    </location>
    <ligand>
        <name>ATP</name>
        <dbReference type="ChEBI" id="CHEBI:30616"/>
    </ligand>
</feature>
<feature type="binding site" evidence="1">
    <location>
        <position position="409"/>
    </location>
    <ligand>
        <name>ADP</name>
        <dbReference type="ChEBI" id="CHEBI:456216"/>
    </ligand>
</feature>
<feature type="binding site" evidence="1">
    <location>
        <position position="409"/>
    </location>
    <ligand>
        <name>ATP</name>
        <dbReference type="ChEBI" id="CHEBI:30616"/>
    </ligand>
</feature>
<feature type="binding site" evidence="1">
    <location>
        <position position="413"/>
    </location>
    <ligand>
        <name>ADP</name>
        <dbReference type="ChEBI" id="CHEBI:456216"/>
    </ligand>
</feature>
<name>GLPK_SHEFN</name>
<protein>
    <recommendedName>
        <fullName evidence="1">Glycerol kinase</fullName>
        <ecNumber evidence="1">2.7.1.30</ecNumber>
    </recommendedName>
    <alternativeName>
        <fullName evidence="1">ATP:glycerol 3-phosphotransferase</fullName>
    </alternativeName>
    <alternativeName>
        <fullName evidence="1">Glycerokinase</fullName>
        <shortName evidence="1">GK</shortName>
    </alternativeName>
</protein>
<evidence type="ECO:0000255" key="1">
    <source>
        <dbReference type="HAMAP-Rule" id="MF_00186"/>
    </source>
</evidence>
<sequence>MVVKKYIVALDQGTTSSRAIVFDHQANIVAVAQREFTQHYPQAGWVEHDPMEIWSSQSSALVEVLTRAGISRHDVAAIGITNQRETTIVWNKHTGKPVCNAIVWQCRRSQAICLDLKAQGVEDLVRQKTGLVLDPYFSASKIKWILDNVEGAREQAEAGDLLFGTVDTWLVWKLTQGEVHVTEPTNASRTMLFNIHTQEWDEELLDLFNIPRAMLPEVKPSCAIYGYTELAGNHIPVAGMAGDQQSALFGQLCIEPGMAKNTYGTGCFLLMNTGDKAVESTHGLLTTIAIGADTKVNYALEGSVFMGGAVIQWLRDELGLITDACDTQYFADKVDDTNGVYLVPAFVGLGAPYWDADARGAIIGLTRGANRNHIIRAALEAIAYQSRDVLDAMSKDSNVPLTQIRVDGGAVANDFLMQFQADITGVTVIRPQVTETTAMGAAFLAGLAVGVWKSTDELKTMLSTEREFTSTMDITTRATLYKGWQKAVSQVSPNGDVG</sequence>
<gene>
    <name evidence="1" type="primary">glpK</name>
    <name type="ordered locus">Sfri_3815</name>
</gene>
<accession>Q07WH4</accession>
<proteinExistence type="inferred from homology"/>
<keyword id="KW-0067">ATP-binding</keyword>
<keyword id="KW-0319">Glycerol metabolism</keyword>
<keyword id="KW-0418">Kinase</keyword>
<keyword id="KW-0547">Nucleotide-binding</keyword>
<keyword id="KW-1185">Reference proteome</keyword>
<keyword id="KW-0808">Transferase</keyword>
<comment type="function">
    <text evidence="1">Key enzyme in the regulation of glycerol uptake and metabolism. Catalyzes the phosphorylation of glycerol to yield sn-glycerol 3-phosphate.</text>
</comment>
<comment type="catalytic activity">
    <reaction evidence="1">
        <text>glycerol + ATP = sn-glycerol 3-phosphate + ADP + H(+)</text>
        <dbReference type="Rhea" id="RHEA:21644"/>
        <dbReference type="ChEBI" id="CHEBI:15378"/>
        <dbReference type="ChEBI" id="CHEBI:17754"/>
        <dbReference type="ChEBI" id="CHEBI:30616"/>
        <dbReference type="ChEBI" id="CHEBI:57597"/>
        <dbReference type="ChEBI" id="CHEBI:456216"/>
        <dbReference type="EC" id="2.7.1.30"/>
    </reaction>
</comment>
<comment type="activity regulation">
    <text evidence="1">Inhibited by fructose 1,6-bisphosphate (FBP).</text>
</comment>
<comment type="pathway">
    <text evidence="1">Polyol metabolism; glycerol degradation via glycerol kinase pathway; sn-glycerol 3-phosphate from glycerol: step 1/1.</text>
</comment>
<comment type="similarity">
    <text evidence="1">Belongs to the FGGY kinase family.</text>
</comment>
<reference key="1">
    <citation type="submission" date="2006-08" db="EMBL/GenBank/DDBJ databases">
        <title>Complete sequence of Shewanella frigidimarina NCIMB 400.</title>
        <authorList>
            <consortium name="US DOE Joint Genome Institute"/>
            <person name="Copeland A."/>
            <person name="Lucas S."/>
            <person name="Lapidus A."/>
            <person name="Barry K."/>
            <person name="Detter J.C."/>
            <person name="Glavina del Rio T."/>
            <person name="Hammon N."/>
            <person name="Israni S."/>
            <person name="Dalin E."/>
            <person name="Tice H."/>
            <person name="Pitluck S."/>
            <person name="Fredrickson J.K."/>
            <person name="Kolker E."/>
            <person name="McCuel L.A."/>
            <person name="DiChristina T."/>
            <person name="Nealson K.H."/>
            <person name="Newman D."/>
            <person name="Tiedje J.M."/>
            <person name="Zhou J."/>
            <person name="Romine M.F."/>
            <person name="Culley D.E."/>
            <person name="Serres M."/>
            <person name="Chertkov O."/>
            <person name="Brettin T."/>
            <person name="Bruce D."/>
            <person name="Han C."/>
            <person name="Tapia R."/>
            <person name="Gilna P."/>
            <person name="Schmutz J."/>
            <person name="Larimer F."/>
            <person name="Land M."/>
            <person name="Hauser L."/>
            <person name="Kyrpides N."/>
            <person name="Mikhailova N."/>
            <person name="Richardson P."/>
        </authorList>
    </citation>
    <scope>NUCLEOTIDE SEQUENCE [LARGE SCALE GENOMIC DNA]</scope>
    <source>
        <strain>NCIMB 400</strain>
    </source>
</reference>
<dbReference type="EC" id="2.7.1.30" evidence="1"/>
<dbReference type="EMBL" id="CP000447">
    <property type="protein sequence ID" value="ABI73640.1"/>
    <property type="molecule type" value="Genomic_DNA"/>
</dbReference>
<dbReference type="SMR" id="Q07WH4"/>
<dbReference type="STRING" id="318167.Sfri_3815"/>
<dbReference type="KEGG" id="sfr:Sfri_3815"/>
<dbReference type="eggNOG" id="COG0554">
    <property type="taxonomic scope" value="Bacteria"/>
</dbReference>
<dbReference type="HOGENOM" id="CLU_009281_2_3_6"/>
<dbReference type="UniPathway" id="UPA00618">
    <property type="reaction ID" value="UER00672"/>
</dbReference>
<dbReference type="Proteomes" id="UP000000684">
    <property type="component" value="Chromosome"/>
</dbReference>
<dbReference type="GO" id="GO:0005829">
    <property type="term" value="C:cytosol"/>
    <property type="evidence" value="ECO:0007669"/>
    <property type="project" value="TreeGrafter"/>
</dbReference>
<dbReference type="GO" id="GO:0005524">
    <property type="term" value="F:ATP binding"/>
    <property type="evidence" value="ECO:0007669"/>
    <property type="project" value="UniProtKB-UniRule"/>
</dbReference>
<dbReference type="GO" id="GO:0004370">
    <property type="term" value="F:glycerol kinase activity"/>
    <property type="evidence" value="ECO:0000250"/>
    <property type="project" value="UniProtKB"/>
</dbReference>
<dbReference type="GO" id="GO:0019563">
    <property type="term" value="P:glycerol catabolic process"/>
    <property type="evidence" value="ECO:0007669"/>
    <property type="project" value="UniProtKB-UniRule"/>
</dbReference>
<dbReference type="GO" id="GO:0006071">
    <property type="term" value="P:glycerol metabolic process"/>
    <property type="evidence" value="ECO:0000250"/>
    <property type="project" value="UniProtKB"/>
</dbReference>
<dbReference type="GO" id="GO:0006072">
    <property type="term" value="P:glycerol-3-phosphate metabolic process"/>
    <property type="evidence" value="ECO:0007669"/>
    <property type="project" value="InterPro"/>
</dbReference>
<dbReference type="CDD" id="cd07786">
    <property type="entry name" value="FGGY_EcGK_like"/>
    <property type="match status" value="1"/>
</dbReference>
<dbReference type="FunFam" id="3.30.420.40:FF:000007">
    <property type="entry name" value="Glycerol kinase"/>
    <property type="match status" value="1"/>
</dbReference>
<dbReference type="FunFam" id="3.30.420.40:FF:000008">
    <property type="entry name" value="Glycerol kinase"/>
    <property type="match status" value="1"/>
</dbReference>
<dbReference type="Gene3D" id="3.30.420.40">
    <property type="match status" value="2"/>
</dbReference>
<dbReference type="HAMAP" id="MF_00186">
    <property type="entry name" value="Glycerol_kin"/>
    <property type="match status" value="1"/>
</dbReference>
<dbReference type="InterPro" id="IPR043129">
    <property type="entry name" value="ATPase_NBD"/>
</dbReference>
<dbReference type="InterPro" id="IPR000577">
    <property type="entry name" value="Carb_kinase_FGGY"/>
</dbReference>
<dbReference type="InterPro" id="IPR018483">
    <property type="entry name" value="Carb_kinase_FGGY_CS"/>
</dbReference>
<dbReference type="InterPro" id="IPR018485">
    <property type="entry name" value="FGGY_C"/>
</dbReference>
<dbReference type="InterPro" id="IPR018484">
    <property type="entry name" value="FGGY_N"/>
</dbReference>
<dbReference type="InterPro" id="IPR005999">
    <property type="entry name" value="Glycerol_kin"/>
</dbReference>
<dbReference type="NCBIfam" id="TIGR01311">
    <property type="entry name" value="glycerol_kin"/>
    <property type="match status" value="1"/>
</dbReference>
<dbReference type="NCBIfam" id="NF000756">
    <property type="entry name" value="PRK00047.1"/>
    <property type="match status" value="1"/>
</dbReference>
<dbReference type="PANTHER" id="PTHR10196:SF69">
    <property type="entry name" value="GLYCEROL KINASE"/>
    <property type="match status" value="1"/>
</dbReference>
<dbReference type="PANTHER" id="PTHR10196">
    <property type="entry name" value="SUGAR KINASE"/>
    <property type="match status" value="1"/>
</dbReference>
<dbReference type="Pfam" id="PF02782">
    <property type="entry name" value="FGGY_C"/>
    <property type="match status" value="1"/>
</dbReference>
<dbReference type="Pfam" id="PF00370">
    <property type="entry name" value="FGGY_N"/>
    <property type="match status" value="1"/>
</dbReference>
<dbReference type="PIRSF" id="PIRSF000538">
    <property type="entry name" value="GlpK"/>
    <property type="match status" value="1"/>
</dbReference>
<dbReference type="SUPFAM" id="SSF53067">
    <property type="entry name" value="Actin-like ATPase domain"/>
    <property type="match status" value="2"/>
</dbReference>
<dbReference type="PROSITE" id="PS00933">
    <property type="entry name" value="FGGY_KINASES_1"/>
    <property type="match status" value="1"/>
</dbReference>
<dbReference type="PROSITE" id="PS00445">
    <property type="entry name" value="FGGY_KINASES_2"/>
    <property type="match status" value="1"/>
</dbReference>